<sequence>MADMKRLKHLMFSPFIDNNPIALQVLGICSALAVTTKLQTAIVMGISVALVTGFSSFFISLVRNYIPNSIRIIVQMAIIASLVTLVDQLLQAFAYELSKQLSVFVGLIITNCIVMGRAEAFAMKEPPLESLIDGIGNGAGYGMMLLVVATVRELIGSGKLLGYTVFQTVQDGGWYQTNGLFLLAPSAFFIIGFLIWGLRTWKPEQAEE</sequence>
<gene>
    <name evidence="1" type="primary">nqrD</name>
    <name type="ordered locus">NGO_1416</name>
</gene>
<feature type="chain" id="PRO_1000060155" description="Na(+)-translocating NADH-quinone reductase subunit D">
    <location>
        <begin position="1"/>
        <end position="208"/>
    </location>
</feature>
<feature type="transmembrane region" description="Helical" evidence="1">
    <location>
        <begin position="42"/>
        <end position="62"/>
    </location>
</feature>
<feature type="transmembrane region" description="Helical" evidence="1">
    <location>
        <begin position="72"/>
        <end position="92"/>
    </location>
</feature>
<feature type="transmembrane region" description="Helical" evidence="1">
    <location>
        <begin position="103"/>
        <end position="123"/>
    </location>
</feature>
<feature type="transmembrane region" description="Helical" evidence="1">
    <location>
        <begin position="131"/>
        <end position="151"/>
    </location>
</feature>
<feature type="transmembrane region" description="Helical" evidence="1">
    <location>
        <begin position="178"/>
        <end position="198"/>
    </location>
</feature>
<organism>
    <name type="scientific">Neisseria gonorrhoeae (strain ATCC 700825 / FA 1090)</name>
    <dbReference type="NCBI Taxonomy" id="242231"/>
    <lineage>
        <taxon>Bacteria</taxon>
        <taxon>Pseudomonadati</taxon>
        <taxon>Pseudomonadota</taxon>
        <taxon>Betaproteobacteria</taxon>
        <taxon>Neisseriales</taxon>
        <taxon>Neisseriaceae</taxon>
        <taxon>Neisseria</taxon>
    </lineage>
</organism>
<accession>Q5F6X7</accession>
<evidence type="ECO:0000255" key="1">
    <source>
        <dbReference type="HAMAP-Rule" id="MF_00428"/>
    </source>
</evidence>
<comment type="function">
    <text evidence="1">NQR complex catalyzes the reduction of ubiquinone-1 to ubiquinol by two successive reactions, coupled with the transport of Na(+) ions from the cytoplasm to the periplasm. NqrA to NqrE are probably involved in the second step, the conversion of ubisemiquinone to ubiquinol.</text>
</comment>
<comment type="catalytic activity">
    <reaction evidence="1">
        <text>a ubiquinone + n Na(+)(in) + NADH + H(+) = a ubiquinol + n Na(+)(out) + NAD(+)</text>
        <dbReference type="Rhea" id="RHEA:47748"/>
        <dbReference type="Rhea" id="RHEA-COMP:9565"/>
        <dbReference type="Rhea" id="RHEA-COMP:9566"/>
        <dbReference type="ChEBI" id="CHEBI:15378"/>
        <dbReference type="ChEBI" id="CHEBI:16389"/>
        <dbReference type="ChEBI" id="CHEBI:17976"/>
        <dbReference type="ChEBI" id="CHEBI:29101"/>
        <dbReference type="ChEBI" id="CHEBI:57540"/>
        <dbReference type="ChEBI" id="CHEBI:57945"/>
        <dbReference type="EC" id="7.2.1.1"/>
    </reaction>
</comment>
<comment type="subunit">
    <text evidence="1">Composed of six subunits; NqrA, NqrB, NqrC, NqrD, NqrE and NqrF.</text>
</comment>
<comment type="subcellular location">
    <subcellularLocation>
        <location evidence="1">Cell inner membrane</location>
        <topology evidence="1">Multi-pass membrane protein</topology>
    </subcellularLocation>
</comment>
<comment type="similarity">
    <text evidence="1">Belongs to the NqrDE/RnfAE family.</text>
</comment>
<name>NQRD_NEIG1</name>
<keyword id="KW-0997">Cell inner membrane</keyword>
<keyword id="KW-1003">Cell membrane</keyword>
<keyword id="KW-0406">Ion transport</keyword>
<keyword id="KW-0472">Membrane</keyword>
<keyword id="KW-0520">NAD</keyword>
<keyword id="KW-1185">Reference proteome</keyword>
<keyword id="KW-0915">Sodium</keyword>
<keyword id="KW-0739">Sodium transport</keyword>
<keyword id="KW-1278">Translocase</keyword>
<keyword id="KW-0812">Transmembrane</keyword>
<keyword id="KW-1133">Transmembrane helix</keyword>
<keyword id="KW-0813">Transport</keyword>
<keyword id="KW-0830">Ubiquinone</keyword>
<dbReference type="EC" id="7.2.1.1" evidence="1"/>
<dbReference type="EMBL" id="AE004969">
    <property type="protein sequence ID" value="AAW90060.1"/>
    <property type="molecule type" value="Genomic_DNA"/>
</dbReference>
<dbReference type="RefSeq" id="WP_002214361.1">
    <property type="nucleotide sequence ID" value="NC_002946.2"/>
</dbReference>
<dbReference type="RefSeq" id="YP_208472.1">
    <property type="nucleotide sequence ID" value="NC_002946.2"/>
</dbReference>
<dbReference type="SMR" id="Q5F6X7"/>
<dbReference type="STRING" id="242231.NGO_1416"/>
<dbReference type="KEGG" id="ngo:NGO_1416"/>
<dbReference type="PATRIC" id="fig|242231.10.peg.1668"/>
<dbReference type="HOGENOM" id="CLU_046659_1_1_4"/>
<dbReference type="Proteomes" id="UP000000535">
    <property type="component" value="Chromosome"/>
</dbReference>
<dbReference type="GO" id="GO:0005886">
    <property type="term" value="C:plasma membrane"/>
    <property type="evidence" value="ECO:0007669"/>
    <property type="project" value="UniProtKB-SubCell"/>
</dbReference>
<dbReference type="GO" id="GO:0016655">
    <property type="term" value="F:oxidoreductase activity, acting on NAD(P)H, quinone or similar compound as acceptor"/>
    <property type="evidence" value="ECO:0007669"/>
    <property type="project" value="UniProtKB-UniRule"/>
</dbReference>
<dbReference type="GO" id="GO:0006814">
    <property type="term" value="P:sodium ion transport"/>
    <property type="evidence" value="ECO:0007669"/>
    <property type="project" value="UniProtKB-UniRule"/>
</dbReference>
<dbReference type="HAMAP" id="MF_00428">
    <property type="entry name" value="NqrD"/>
    <property type="match status" value="1"/>
</dbReference>
<dbReference type="InterPro" id="IPR011292">
    <property type="entry name" value="NqrD"/>
</dbReference>
<dbReference type="InterPro" id="IPR003667">
    <property type="entry name" value="NqrDE/RnfAE"/>
</dbReference>
<dbReference type="NCBIfam" id="TIGR01939">
    <property type="entry name" value="nqrD"/>
    <property type="match status" value="1"/>
</dbReference>
<dbReference type="NCBIfam" id="NF006777">
    <property type="entry name" value="PRK09292.1"/>
    <property type="match status" value="1"/>
</dbReference>
<dbReference type="NCBIfam" id="NF009070">
    <property type="entry name" value="PRK12405.1"/>
    <property type="match status" value="1"/>
</dbReference>
<dbReference type="PANTHER" id="PTHR30586">
    <property type="entry name" value="ELECTRON TRANSPORT COMPLEX PROTEIN RNFE"/>
    <property type="match status" value="1"/>
</dbReference>
<dbReference type="PANTHER" id="PTHR30586:SF1">
    <property type="entry name" value="NA(+)-TRANSLOCATING NADH-QUINONE REDUCTASE SUBUNIT D"/>
    <property type="match status" value="1"/>
</dbReference>
<dbReference type="Pfam" id="PF02508">
    <property type="entry name" value="Rnf-Nqr"/>
    <property type="match status" value="1"/>
</dbReference>
<dbReference type="PIRSF" id="PIRSF006102">
    <property type="entry name" value="NQR_DE"/>
    <property type="match status" value="1"/>
</dbReference>
<reference key="1">
    <citation type="submission" date="2003-03" db="EMBL/GenBank/DDBJ databases">
        <title>The complete genome sequence of Neisseria gonorrhoeae.</title>
        <authorList>
            <person name="Lewis L.A."/>
            <person name="Gillaspy A.F."/>
            <person name="McLaughlin R.E."/>
            <person name="Gipson M."/>
            <person name="Ducey T.F."/>
            <person name="Ownbey T."/>
            <person name="Hartman K."/>
            <person name="Nydick C."/>
            <person name="Carson M.B."/>
            <person name="Vaughn J."/>
            <person name="Thomson C."/>
            <person name="Song L."/>
            <person name="Lin S."/>
            <person name="Yuan X."/>
            <person name="Najar F."/>
            <person name="Zhan M."/>
            <person name="Ren Q."/>
            <person name="Zhu H."/>
            <person name="Qi S."/>
            <person name="Kenton S.M."/>
            <person name="Lai H."/>
            <person name="White J.D."/>
            <person name="Clifton S."/>
            <person name="Roe B.A."/>
            <person name="Dyer D.W."/>
        </authorList>
    </citation>
    <scope>NUCLEOTIDE SEQUENCE [LARGE SCALE GENOMIC DNA]</scope>
    <source>
        <strain>ATCC 700825 / FA 1090</strain>
    </source>
</reference>
<proteinExistence type="inferred from homology"/>
<protein>
    <recommendedName>
        <fullName evidence="1">Na(+)-translocating NADH-quinone reductase subunit D</fullName>
        <shortName evidence="1">Na(+)-NQR subunit D</shortName>
        <shortName evidence="1">Na(+)-translocating NQR subunit D</shortName>
        <ecNumber evidence="1">7.2.1.1</ecNumber>
    </recommendedName>
    <alternativeName>
        <fullName evidence="1">NQR complex subunit D</fullName>
    </alternativeName>
    <alternativeName>
        <fullName evidence="1">NQR-1 subunit D</fullName>
    </alternativeName>
</protein>